<dbReference type="EC" id="2.3.1.48" evidence="6"/>
<dbReference type="EMBL" id="Z48483">
    <property type="protein sequence ID" value="CAA88385.1"/>
    <property type="molecule type" value="Genomic_DNA"/>
</dbReference>
<dbReference type="EMBL" id="Z71255">
    <property type="protein sequence ID" value="CAA95040.1"/>
    <property type="molecule type" value="Genomic_DNA"/>
</dbReference>
<dbReference type="EMBL" id="U33335">
    <property type="protein sequence ID" value="AAB68104.1"/>
    <property type="molecule type" value="Genomic_DNA"/>
</dbReference>
<dbReference type="EMBL" id="AY558042">
    <property type="protein sequence ID" value="AAS56368.1"/>
    <property type="molecule type" value="Genomic_DNA"/>
</dbReference>
<dbReference type="EMBL" id="BK006949">
    <property type="protein sequence ID" value="DAA11427.1"/>
    <property type="molecule type" value="Genomic_DNA"/>
</dbReference>
<dbReference type="PIR" id="A57583">
    <property type="entry name" value="A57583"/>
</dbReference>
<dbReference type="RefSeq" id="NP_015324.1">
    <property type="nucleotide sequence ID" value="NM_001183815.1"/>
</dbReference>
<dbReference type="PDB" id="1BOB">
    <property type="method" value="X-ray"/>
    <property type="resolution" value="2.30 A"/>
    <property type="chains" value="A=1-320"/>
</dbReference>
<dbReference type="PDB" id="4PSW">
    <property type="method" value="X-ray"/>
    <property type="resolution" value="2.10 A"/>
    <property type="chains" value="A=4-320"/>
</dbReference>
<dbReference type="PDB" id="4PSX">
    <property type="method" value="X-ray"/>
    <property type="resolution" value="2.51 A"/>
    <property type="chains" value="A/D=7-319"/>
</dbReference>
<dbReference type="PDB" id="7XAY">
    <property type="method" value="X-ray"/>
    <property type="resolution" value="3.30 A"/>
    <property type="chains" value="A=11-320"/>
</dbReference>
<dbReference type="PDBsum" id="1BOB"/>
<dbReference type="PDBsum" id="4PSW"/>
<dbReference type="PDBsum" id="4PSX"/>
<dbReference type="PDBsum" id="7XAY"/>
<dbReference type="SMR" id="Q12341"/>
<dbReference type="BioGRID" id="36176">
    <property type="interactions" value="180"/>
</dbReference>
<dbReference type="ComplexPortal" id="CPX-1682">
    <property type="entry name" value="Histone acetyltransferase B"/>
</dbReference>
<dbReference type="DIP" id="DIP-2362N"/>
<dbReference type="FunCoup" id="Q12341">
    <property type="interactions" value="1347"/>
</dbReference>
<dbReference type="IntAct" id="Q12341">
    <property type="interactions" value="23"/>
</dbReference>
<dbReference type="MINT" id="Q12341"/>
<dbReference type="STRING" id="4932.YPL001W"/>
<dbReference type="iPTMnet" id="Q12341"/>
<dbReference type="PaxDb" id="4932-YPL001W"/>
<dbReference type="PeptideAtlas" id="Q12341"/>
<dbReference type="PRIDE" id="Q12341"/>
<dbReference type="EnsemblFungi" id="YPL001W_mRNA">
    <property type="protein sequence ID" value="YPL001W"/>
    <property type="gene ID" value="YPL001W"/>
</dbReference>
<dbReference type="GeneID" id="856106"/>
<dbReference type="KEGG" id="sce:YPL001W"/>
<dbReference type="AGR" id="SGD:S000005922"/>
<dbReference type="SGD" id="S000005922">
    <property type="gene designation" value="HAT1"/>
</dbReference>
<dbReference type="VEuPathDB" id="FungiDB:YPL001W"/>
<dbReference type="eggNOG" id="KOG2696">
    <property type="taxonomic scope" value="Eukaryota"/>
</dbReference>
<dbReference type="GeneTree" id="ENSGT00390000007069"/>
<dbReference type="HOGENOM" id="CLU_036024_2_1_1"/>
<dbReference type="InParanoid" id="Q12341"/>
<dbReference type="OMA" id="HNANECI"/>
<dbReference type="OrthoDB" id="10253098at2759"/>
<dbReference type="BioCyc" id="YEAST:G3O-33920-MONOMER"/>
<dbReference type="Reactome" id="R-SCE-3214847">
    <property type="pathway name" value="HATs acetylate histones"/>
</dbReference>
<dbReference type="BioGRID-ORCS" id="856106">
    <property type="hits" value="0 hits in 10 CRISPR screens"/>
</dbReference>
<dbReference type="EvolutionaryTrace" id="Q12341"/>
<dbReference type="PRO" id="PR:Q12341"/>
<dbReference type="Proteomes" id="UP000002311">
    <property type="component" value="Chromosome XVI"/>
</dbReference>
<dbReference type="RNAct" id="Q12341">
    <property type="molecule type" value="protein"/>
</dbReference>
<dbReference type="GO" id="GO:0000781">
    <property type="term" value="C:chromosome, telomeric region"/>
    <property type="evidence" value="ECO:0007669"/>
    <property type="project" value="GOC"/>
</dbReference>
<dbReference type="GO" id="GO:0005737">
    <property type="term" value="C:cytoplasm"/>
    <property type="evidence" value="ECO:0000314"/>
    <property type="project" value="SGD"/>
</dbReference>
<dbReference type="GO" id="GO:0000123">
    <property type="term" value="C:histone acetyltransferase complex"/>
    <property type="evidence" value="ECO:0000314"/>
    <property type="project" value="SGD"/>
</dbReference>
<dbReference type="GO" id="GO:0005634">
    <property type="term" value="C:nucleus"/>
    <property type="evidence" value="ECO:0000314"/>
    <property type="project" value="ComplexPortal"/>
</dbReference>
<dbReference type="GO" id="GO:0003682">
    <property type="term" value="F:chromatin binding"/>
    <property type="evidence" value="ECO:0000314"/>
    <property type="project" value="SGD"/>
</dbReference>
<dbReference type="GO" id="GO:0004402">
    <property type="term" value="F:histone acetyltransferase activity"/>
    <property type="evidence" value="ECO:0000314"/>
    <property type="project" value="SGD"/>
</dbReference>
<dbReference type="GO" id="GO:0042393">
    <property type="term" value="F:histone binding"/>
    <property type="evidence" value="ECO:0007669"/>
    <property type="project" value="InterPro"/>
</dbReference>
<dbReference type="GO" id="GO:0010485">
    <property type="term" value="F:histone H4 acetyltransferase activity"/>
    <property type="evidence" value="ECO:0000318"/>
    <property type="project" value="GO_Central"/>
</dbReference>
<dbReference type="GO" id="GO:0006302">
    <property type="term" value="P:double-strand break repair"/>
    <property type="evidence" value="ECO:0000314"/>
    <property type="project" value="SGD"/>
</dbReference>
<dbReference type="GO" id="GO:0031509">
    <property type="term" value="P:subtelomeric heterochromatin formation"/>
    <property type="evidence" value="ECO:0000314"/>
    <property type="project" value="ComplexPortal"/>
</dbReference>
<dbReference type="CDD" id="cd04301">
    <property type="entry name" value="NAT_SF"/>
    <property type="match status" value="1"/>
</dbReference>
<dbReference type="FunFam" id="3.40.630.30:FF:000114">
    <property type="entry name" value="Histone acetyltransferase type B catalytic subunit"/>
    <property type="match status" value="1"/>
</dbReference>
<dbReference type="FunFam" id="3.90.360.10:FF:000005">
    <property type="entry name" value="Histone acetyltransferase type B catalytic subunit"/>
    <property type="match status" value="1"/>
</dbReference>
<dbReference type="Gene3D" id="1.10.10.390">
    <property type="match status" value="1"/>
</dbReference>
<dbReference type="Gene3D" id="3.40.630.30">
    <property type="match status" value="1"/>
</dbReference>
<dbReference type="Gene3D" id="3.90.360.10">
    <property type="entry name" value="Histone acetyl transferase 1 (HAT1), N-terminal domain"/>
    <property type="match status" value="1"/>
</dbReference>
<dbReference type="InterPro" id="IPR016181">
    <property type="entry name" value="Acyl_CoA_acyltransferase"/>
</dbReference>
<dbReference type="InterPro" id="IPR000182">
    <property type="entry name" value="GNAT_dom"/>
</dbReference>
<dbReference type="InterPro" id="IPR019467">
    <property type="entry name" value="Hat1_N"/>
</dbReference>
<dbReference type="InterPro" id="IPR037113">
    <property type="entry name" value="Hat1_N_sf"/>
</dbReference>
<dbReference type="InterPro" id="IPR017380">
    <property type="entry name" value="Hist_AcTrfase_B-typ_cat-su"/>
</dbReference>
<dbReference type="InterPro" id="IPR013523">
    <property type="entry name" value="Hist_AcTrfase_HAT1_C"/>
</dbReference>
<dbReference type="PANTHER" id="PTHR12046">
    <property type="entry name" value="HISTONE ACETYLTRANSFERASE TYPE B CATALYTIC SUBUNIT"/>
    <property type="match status" value="1"/>
</dbReference>
<dbReference type="Pfam" id="PF00583">
    <property type="entry name" value="Acetyltransf_1"/>
    <property type="match status" value="1"/>
</dbReference>
<dbReference type="Pfam" id="PF21184">
    <property type="entry name" value="HAT1_C_fung"/>
    <property type="match status" value="1"/>
</dbReference>
<dbReference type="Pfam" id="PF10394">
    <property type="entry name" value="Hat1_N"/>
    <property type="match status" value="1"/>
</dbReference>
<dbReference type="PIRSF" id="PIRSF038084">
    <property type="entry name" value="HAT-B_cat"/>
    <property type="match status" value="1"/>
</dbReference>
<dbReference type="SUPFAM" id="SSF55729">
    <property type="entry name" value="Acyl-CoA N-acyltransferases (Nat)"/>
    <property type="match status" value="1"/>
</dbReference>
<dbReference type="PROSITE" id="PS51186">
    <property type="entry name" value="GNAT"/>
    <property type="match status" value="1"/>
</dbReference>
<gene>
    <name type="primary">HAT1</name>
    <name type="ordered locus">YPL001W</name>
    <name type="ORF">LPA16W</name>
    <name type="ORF">YP8132.12</name>
</gene>
<protein>
    <recommendedName>
        <fullName>Histone acetyltransferase type B catalytic subunit</fullName>
        <ecNumber evidence="6">2.3.1.48</ecNumber>
    </recommendedName>
</protein>
<keyword id="KW-0002">3D-structure</keyword>
<keyword id="KW-0012">Acyltransferase</keyword>
<keyword id="KW-0156">Chromatin regulator</keyword>
<keyword id="KW-0963">Cytoplasm</keyword>
<keyword id="KW-0903">Direct protein sequencing</keyword>
<keyword id="KW-0227">DNA damage</keyword>
<keyword id="KW-0234">DNA repair</keyword>
<keyword id="KW-0539">Nucleus</keyword>
<keyword id="KW-0597">Phosphoprotein</keyword>
<keyword id="KW-1185">Reference proteome</keyword>
<keyword id="KW-0808">Transferase</keyword>
<comment type="function">
    <text evidence="2 3 4 5 6 7">Catalytic component of the histone acetylase B (HAT-B) complex. Acetylates 'Lys-12' of free histone H4 in the cytoplasm. The complex is also found in the nucleus, however it is not certain that it modifies histone H4 when packaged in chromatin. Histone H4 'Lys-12' acetylation is required for telomeric silencing. Has intrinsic substrate specificity that modifies lysine in recognition sequence GXGKXG. Involved in DNA double-strand break repair.</text>
</comment>
<comment type="catalytic activity">
    <reaction evidence="6">
        <text>L-lysyl-[protein] + acetyl-CoA = N(6)-acetyl-L-lysyl-[protein] + CoA + H(+)</text>
        <dbReference type="Rhea" id="RHEA:45948"/>
        <dbReference type="Rhea" id="RHEA-COMP:9752"/>
        <dbReference type="Rhea" id="RHEA-COMP:10731"/>
        <dbReference type="ChEBI" id="CHEBI:15378"/>
        <dbReference type="ChEBI" id="CHEBI:29969"/>
        <dbReference type="ChEBI" id="CHEBI:57287"/>
        <dbReference type="ChEBI" id="CHEBI:57288"/>
        <dbReference type="ChEBI" id="CHEBI:61930"/>
        <dbReference type="EC" id="2.3.1.48"/>
    </reaction>
</comment>
<comment type="subunit">
    <text evidence="4 5 6 8 9">Component of the HAT-B complex composed of at least HAT1 and HAT2. In the cytoplasm, this complex binds to the histone H4 tail. In the nucleus, the HAT-B complex has an additional component, the histone H3/H4 chaperone HIF1.</text>
</comment>
<comment type="interaction">
    <interactant intactId="EBI-8176">
        <id>Q12341</id>
    </interactant>
    <interactant intactId="EBI-8185">
        <id>P39984</id>
        <label>HAT2</label>
    </interactant>
    <organismsDiffer>false</organismsDiffer>
    <experiments>5</experiments>
</comment>
<comment type="subcellular location">
    <subcellularLocation>
        <location>Cytoplasm</location>
    </subcellularLocation>
    <subcellularLocation>
        <location>Nucleus</location>
    </subcellularLocation>
</comment>
<comment type="similarity">
    <text evidence="11">Belongs to the HAT1 family.</text>
</comment>
<accession>Q12341</accession>
<accession>D6W411</accession>
<accession>Q6Q5I5</accession>
<feature type="chain" id="PRO_0000083903" description="Histone acetyltransferase type B catalytic subunit">
    <location>
        <begin position="1"/>
        <end position="374"/>
    </location>
</feature>
<feature type="domain" description="N-acetyltransferase" evidence="1">
    <location>
        <begin position="135"/>
        <end position="303"/>
    </location>
</feature>
<feature type="region of interest" description="Interaction with histone H4 N-terminus" evidence="6">
    <location>
        <begin position="42"/>
        <end position="44"/>
    </location>
</feature>
<feature type="region of interest" description="Interaction with histone H4 N-terminus" evidence="6">
    <location>
        <begin position="194"/>
        <end position="196"/>
    </location>
</feature>
<feature type="region of interest" description="Interaction with HAT2" evidence="6 8">
    <location>
        <begin position="197"/>
        <end position="205"/>
    </location>
</feature>
<feature type="active site" description="Proton donor/acceptor" evidence="10">
    <location>
        <position position="255"/>
    </location>
</feature>
<feature type="binding site" evidence="6 9">
    <location>
        <begin position="220"/>
        <end position="222"/>
    </location>
    <ligand>
        <name>acetyl-CoA</name>
        <dbReference type="ChEBI" id="CHEBI:57288"/>
    </ligand>
</feature>
<feature type="binding site" evidence="6 9">
    <location>
        <begin position="227"/>
        <end position="233"/>
    </location>
    <ligand>
        <name>acetyl-CoA</name>
        <dbReference type="ChEBI" id="CHEBI:57288"/>
    </ligand>
</feature>
<feature type="binding site" evidence="6 9">
    <location>
        <position position="258"/>
    </location>
    <ligand>
        <name>acetyl-CoA</name>
        <dbReference type="ChEBI" id="CHEBI:57288"/>
    </ligand>
</feature>
<feature type="binding site" evidence="9">
    <location>
        <position position="267"/>
    </location>
    <ligand>
        <name>acetyl-CoA</name>
        <dbReference type="ChEBI" id="CHEBI:57288"/>
    </ligand>
</feature>
<feature type="site" description="Interaction with histone H4 N-terminus" evidence="6">
    <location>
        <position position="174"/>
    </location>
</feature>
<feature type="modified residue" description="Phosphoserine" evidence="12">
    <location>
        <position position="354"/>
    </location>
</feature>
<feature type="mutagenesis site" description="Abolishes interaction with HAT2." evidence="6">
    <original>W</original>
    <variation>E</variation>
    <location>
        <position position="197"/>
    </location>
</feature>
<feature type="mutagenesis site" description="Abolishes interaction with HAT2." evidence="6">
    <original>Y</original>
    <variation>E</variation>
    <location>
        <position position="199"/>
    </location>
</feature>
<feature type="mutagenesis site" description="Impairs interaction with HAT2." evidence="6">
    <original>A</original>
    <variation>D</variation>
    <location>
        <position position="202"/>
    </location>
</feature>
<feature type="mutagenesis site" description="Abolishes interaction with HAT2." evidence="6">
    <original>F</original>
    <variation>E</variation>
    <location>
        <position position="205"/>
    </location>
</feature>
<feature type="mutagenesis site" description="Impairs interaction with HAT2." evidence="6">
    <original>R</original>
    <variation>A</variation>
    <location>
        <position position="214"/>
    </location>
</feature>
<feature type="sequence conflict" description="In Ref. 5; AAS56368." evidence="11" ref="5">
    <original>L</original>
    <variation>V</variation>
    <location>
        <position position="87"/>
    </location>
</feature>
<feature type="helix" evidence="14">
    <location>
        <begin position="8"/>
        <end position="11"/>
    </location>
</feature>
<feature type="strand" evidence="14">
    <location>
        <begin position="12"/>
        <end position="14"/>
    </location>
</feature>
<feature type="helix" evidence="14">
    <location>
        <begin position="15"/>
        <end position="18"/>
    </location>
</feature>
<feature type="strand" evidence="14">
    <location>
        <begin position="19"/>
        <end position="31"/>
    </location>
</feature>
<feature type="helix" evidence="14">
    <location>
        <begin position="37"/>
        <end position="40"/>
    </location>
</feature>
<feature type="turn" evidence="13">
    <location>
        <begin position="41"/>
        <end position="44"/>
    </location>
</feature>
<feature type="strand" evidence="14">
    <location>
        <begin position="45"/>
        <end position="51"/>
    </location>
</feature>
<feature type="strand" evidence="14">
    <location>
        <begin position="53"/>
        <end position="59"/>
    </location>
</feature>
<feature type="turn" evidence="14">
    <location>
        <begin position="60"/>
        <end position="62"/>
    </location>
</feature>
<feature type="strand" evidence="14">
    <location>
        <begin position="65"/>
        <end position="70"/>
    </location>
</feature>
<feature type="strand" evidence="14">
    <location>
        <begin position="72"/>
        <end position="74"/>
    </location>
</feature>
<feature type="strand" evidence="14">
    <location>
        <begin position="78"/>
        <end position="80"/>
    </location>
</feature>
<feature type="helix" evidence="14">
    <location>
        <begin position="83"/>
        <end position="88"/>
    </location>
</feature>
<feature type="strand" evidence="14">
    <location>
        <begin position="97"/>
        <end position="99"/>
    </location>
</feature>
<feature type="helix" evidence="14">
    <location>
        <begin position="101"/>
        <end position="113"/>
    </location>
</feature>
<feature type="helix" evidence="14">
    <location>
        <begin position="117"/>
        <end position="120"/>
    </location>
</feature>
<feature type="strand" evidence="14">
    <location>
        <begin position="121"/>
        <end position="128"/>
    </location>
</feature>
<feature type="strand" evidence="14">
    <location>
        <begin position="133"/>
        <end position="143"/>
    </location>
</feature>
<feature type="helix" evidence="14">
    <location>
        <begin position="144"/>
        <end position="153"/>
    </location>
</feature>
<feature type="helix" evidence="14">
    <location>
        <begin position="155"/>
        <end position="160"/>
    </location>
</feature>
<feature type="strand" evidence="14">
    <location>
        <begin position="175"/>
        <end position="181"/>
    </location>
</feature>
<feature type="turn" evidence="14">
    <location>
        <begin position="182"/>
        <end position="184"/>
    </location>
</feature>
<feature type="strand" evidence="14">
    <location>
        <begin position="187"/>
        <end position="197"/>
    </location>
</feature>
<feature type="helix" evidence="14">
    <location>
        <begin position="202"/>
        <end position="207"/>
    </location>
</feature>
<feature type="strand" evidence="14">
    <location>
        <begin position="213"/>
        <end position="222"/>
    </location>
</feature>
<feature type="helix" evidence="14">
    <location>
        <begin position="224"/>
        <end position="226"/>
    </location>
</feature>
<feature type="strand" evidence="14">
    <location>
        <begin position="228"/>
        <end position="230"/>
    </location>
</feature>
<feature type="helix" evidence="14">
    <location>
        <begin position="231"/>
        <end position="244"/>
    </location>
</feature>
<feature type="strand" evidence="14">
    <location>
        <begin position="249"/>
        <end position="256"/>
    </location>
</feature>
<feature type="helix" evidence="14">
    <location>
        <begin position="259"/>
        <end position="275"/>
    </location>
</feature>
<feature type="helix" evidence="14">
    <location>
        <begin position="278"/>
        <end position="281"/>
    </location>
</feature>
<feature type="helix" evidence="14">
    <location>
        <begin position="290"/>
        <end position="300"/>
    </location>
</feature>
<feature type="helix" evidence="14">
    <location>
        <begin position="304"/>
        <end position="318"/>
    </location>
</feature>
<evidence type="ECO:0000255" key="1">
    <source>
        <dbReference type="PROSITE-ProRule" id="PRU00532"/>
    </source>
</evidence>
<evidence type="ECO:0000269" key="2">
    <source>
    </source>
</evidence>
<evidence type="ECO:0000269" key="3">
    <source>
    </source>
</evidence>
<evidence type="ECO:0000269" key="4">
    <source>
    </source>
</evidence>
<evidence type="ECO:0000269" key="5">
    <source>
    </source>
</evidence>
<evidence type="ECO:0000269" key="6">
    <source>
    </source>
</evidence>
<evidence type="ECO:0000269" key="7">
    <source>
    </source>
</evidence>
<evidence type="ECO:0000269" key="8">
    <source>
    </source>
</evidence>
<evidence type="ECO:0000269" key="9">
    <source>
    </source>
</evidence>
<evidence type="ECO:0000303" key="10">
    <source>
    </source>
</evidence>
<evidence type="ECO:0000305" key="11"/>
<evidence type="ECO:0007744" key="12">
    <source>
    </source>
</evidence>
<evidence type="ECO:0007829" key="13">
    <source>
        <dbReference type="PDB" id="1BOB"/>
    </source>
</evidence>
<evidence type="ECO:0007829" key="14">
    <source>
        <dbReference type="PDB" id="4PSW"/>
    </source>
</evidence>
<sequence length="374" mass="43873">MSANDFKPETWTSSANEALRVSIVGENAVQFSPLFTYPIYGDSEKIYGYKDLIIHLAFDSVTFKPYVNVKYSAKLGDDNIVDVEKKLLSFLPKDDVIVRDEAKWVDCFAEERKTHNLSDVFEKVSEYSLNGEEFVVYKSSLVDDFARRMHRRVQIFSLLFIEAANYIDETDPSWQIYWLLNKKTKELIGFVTTYKYWHYLGAKSFDEDIDKKFRAKISQFLIFPPYQNKGHGSCLYEAIIQSWLEDKSITEITVEDPNEAFDDLRDRNDIQRLRKLGYDAVFQKHSDLSDEFLESSRKSLKLEERQFNRLVEMLLLLNNSPSFELKVKNRLYIKNYDALDQTDPEKAREALQNSFILVKDDYRRIIESINKSQG</sequence>
<organism>
    <name type="scientific">Saccharomyces cerevisiae (strain ATCC 204508 / S288c)</name>
    <name type="common">Baker's yeast</name>
    <dbReference type="NCBI Taxonomy" id="559292"/>
    <lineage>
        <taxon>Eukaryota</taxon>
        <taxon>Fungi</taxon>
        <taxon>Dikarya</taxon>
        <taxon>Ascomycota</taxon>
        <taxon>Saccharomycotina</taxon>
        <taxon>Saccharomycetes</taxon>
        <taxon>Saccharomycetales</taxon>
        <taxon>Saccharomycetaceae</taxon>
        <taxon>Saccharomyces</taxon>
    </lineage>
</organism>
<reference key="1">
    <citation type="journal article" date="1996" name="Cell">
        <title>The major cytoplasmic histone acetyltransferase in yeast: links to chromatin replication and histone metabolism.</title>
        <authorList>
            <person name="Parthun M.R."/>
            <person name="Widom J."/>
            <person name="Gottschling D.E."/>
        </authorList>
    </citation>
    <scope>NUCLEOTIDE SEQUENCE [GENOMIC DNA]</scope>
    <scope>PARTIAL PROTEIN SEQUENCE</scope>
    <scope>ACETYLATION OF HISTONE H4</scope>
    <scope>INTERACTION WITH HAT2 AND HISTONE H4</scope>
</reference>
<reference key="2">
    <citation type="journal article" date="1995" name="J. Biol. Chem.">
        <title>Identification of a gene encoding a yeast histone H4 acetyltransferase.</title>
        <authorList>
            <person name="Kleff S."/>
            <person name="Andrulis E.D."/>
            <person name="Anderson C.W."/>
            <person name="Sternglanz R."/>
        </authorList>
    </citation>
    <scope>NUCLEOTIDE SEQUENCE [GENOMIC DNA]</scope>
    <scope>FUNCTION</scope>
</reference>
<reference key="3">
    <citation type="journal article" date="1997" name="Nature">
        <title>The nucleotide sequence of Saccharomyces cerevisiae chromosome XVI.</title>
        <authorList>
            <person name="Bussey H."/>
            <person name="Storms R.K."/>
            <person name="Ahmed A."/>
            <person name="Albermann K."/>
            <person name="Allen E."/>
            <person name="Ansorge W."/>
            <person name="Araujo R."/>
            <person name="Aparicio A."/>
            <person name="Barrell B.G."/>
            <person name="Badcock K."/>
            <person name="Benes V."/>
            <person name="Botstein D."/>
            <person name="Bowman S."/>
            <person name="Brueckner M."/>
            <person name="Carpenter J."/>
            <person name="Cherry J.M."/>
            <person name="Chung E."/>
            <person name="Churcher C.M."/>
            <person name="Coster F."/>
            <person name="Davis K."/>
            <person name="Davis R.W."/>
            <person name="Dietrich F.S."/>
            <person name="Delius H."/>
            <person name="DiPaolo T."/>
            <person name="Dubois E."/>
            <person name="Duesterhoeft A."/>
            <person name="Duncan M."/>
            <person name="Floeth M."/>
            <person name="Fortin N."/>
            <person name="Friesen J.D."/>
            <person name="Fritz C."/>
            <person name="Goffeau A."/>
            <person name="Hall J."/>
            <person name="Hebling U."/>
            <person name="Heumann K."/>
            <person name="Hilbert H."/>
            <person name="Hillier L.W."/>
            <person name="Hunicke-Smith S."/>
            <person name="Hyman R.W."/>
            <person name="Johnston M."/>
            <person name="Kalman S."/>
            <person name="Kleine K."/>
            <person name="Komp C."/>
            <person name="Kurdi O."/>
            <person name="Lashkari D."/>
            <person name="Lew H."/>
            <person name="Lin A."/>
            <person name="Lin D."/>
            <person name="Louis E.J."/>
            <person name="Marathe R."/>
            <person name="Messenguy F."/>
            <person name="Mewes H.-W."/>
            <person name="Mirtipati S."/>
            <person name="Moestl D."/>
            <person name="Mueller-Auer S."/>
            <person name="Namath A."/>
            <person name="Nentwich U."/>
            <person name="Oefner P."/>
            <person name="Pearson D."/>
            <person name="Petel F.X."/>
            <person name="Pohl T.M."/>
            <person name="Purnelle B."/>
            <person name="Rajandream M.A."/>
            <person name="Rechmann S."/>
            <person name="Rieger M."/>
            <person name="Riles L."/>
            <person name="Roberts D."/>
            <person name="Schaefer M."/>
            <person name="Scharfe M."/>
            <person name="Scherens B."/>
            <person name="Schramm S."/>
            <person name="Schroeder M."/>
            <person name="Sdicu A.-M."/>
            <person name="Tettelin H."/>
            <person name="Urrestarazu L.A."/>
            <person name="Ushinsky S."/>
            <person name="Vierendeels F."/>
            <person name="Vissers S."/>
            <person name="Voss H."/>
            <person name="Walsh S.V."/>
            <person name="Wambutt R."/>
            <person name="Wang Y."/>
            <person name="Wedler E."/>
            <person name="Wedler H."/>
            <person name="Winnett E."/>
            <person name="Zhong W.-W."/>
            <person name="Zollner A."/>
            <person name="Vo D.H."/>
            <person name="Hani J."/>
        </authorList>
    </citation>
    <scope>NUCLEOTIDE SEQUENCE [LARGE SCALE GENOMIC DNA]</scope>
    <source>
        <strain>ATCC 204508 / S288c</strain>
    </source>
</reference>
<reference key="4">
    <citation type="journal article" date="2014" name="G3 (Bethesda)">
        <title>The reference genome sequence of Saccharomyces cerevisiae: Then and now.</title>
        <authorList>
            <person name="Engel S.R."/>
            <person name="Dietrich F.S."/>
            <person name="Fisk D.G."/>
            <person name="Binkley G."/>
            <person name="Balakrishnan R."/>
            <person name="Costanzo M.C."/>
            <person name="Dwight S.S."/>
            <person name="Hitz B.C."/>
            <person name="Karra K."/>
            <person name="Nash R.S."/>
            <person name="Weng S."/>
            <person name="Wong E.D."/>
            <person name="Lloyd P."/>
            <person name="Skrzypek M.S."/>
            <person name="Miyasato S.R."/>
            <person name="Simison M."/>
            <person name="Cherry J.M."/>
        </authorList>
    </citation>
    <scope>GENOME REANNOTATION</scope>
    <source>
        <strain>ATCC 204508 / S288c</strain>
    </source>
</reference>
<reference key="5">
    <citation type="journal article" date="2007" name="Genome Res.">
        <title>Approaching a complete repository of sequence-verified protein-encoding clones for Saccharomyces cerevisiae.</title>
        <authorList>
            <person name="Hu Y."/>
            <person name="Rolfs A."/>
            <person name="Bhullar B."/>
            <person name="Murthy T.V.S."/>
            <person name="Zhu C."/>
            <person name="Berger M.F."/>
            <person name="Camargo A.A."/>
            <person name="Kelley F."/>
            <person name="McCarron S."/>
            <person name="Jepson D."/>
            <person name="Richardson A."/>
            <person name="Raphael J."/>
            <person name="Moreira D."/>
            <person name="Taycher E."/>
            <person name="Zuo D."/>
            <person name="Mohr S."/>
            <person name="Kane M.F."/>
            <person name="Williamson J."/>
            <person name="Simpson A.J.G."/>
            <person name="Bulyk M.L."/>
            <person name="Harlow E."/>
            <person name="Marsischky G."/>
            <person name="Kolodner R.D."/>
            <person name="LaBaer J."/>
        </authorList>
    </citation>
    <scope>NUCLEOTIDE SEQUENCE [GENOMIC DNA]</scope>
    <source>
        <strain>ATCC 204508 / S288c</strain>
    </source>
</reference>
<reference key="6">
    <citation type="journal article" date="1998" name="J. Biol. Chem.">
        <title>HAT1 and HAT2 proteins are components of a yeast nuclear histone acetyltransferase enzyme specific for free histone H4.</title>
        <authorList>
            <person name="Ruiz-Garcia A.B."/>
            <person name="Sendra R."/>
            <person name="Galiana M."/>
            <person name="Pamblanco M."/>
            <person name="Perez-Ortin J.E."/>
            <person name="Tordera V."/>
        </authorList>
    </citation>
    <scope>ACETYLATION OF HISTONE H4 BY THE HAT-B COMPLEX</scope>
</reference>
<reference key="7">
    <citation type="journal article" date="2000" name="Mol. Cell. Biol.">
        <title>Type B histone acetyltransferase Hat1p participates in telomeric silencing.</title>
        <authorList>
            <person name="Kelly T.J."/>
            <person name="Qin S."/>
            <person name="Gottschling D.E."/>
            <person name="Parthun M.R."/>
        </authorList>
    </citation>
    <scope>FUNCTION</scope>
    <scope>ACETYLATION OF HISTONE H4</scope>
</reference>
<reference key="8">
    <citation type="journal article" date="2002" name="Mol. Cell. Biol.">
        <title>Histone H3 and the histone acetyltransferase Hat1p contribute to DNA double-strand break repair.</title>
        <authorList>
            <person name="Qin S."/>
            <person name="Parthun M.R."/>
        </authorList>
    </citation>
    <scope>FUNCTION</scope>
</reference>
<reference key="9">
    <citation type="journal article" date="2004" name="J. Biol. Chem.">
        <title>Hif1 is a component of yeast histone acetyltransferase B, a complex mainly localized in the nucleus.</title>
        <authorList>
            <person name="Poveda A."/>
            <person name="Pamblanco M."/>
            <person name="Tafrov S."/>
            <person name="Tordera V."/>
            <person name="Sternglanz R."/>
            <person name="Sendra R."/>
        </authorList>
    </citation>
    <scope>INTERACTION WITH HIF1 AND HISTONE H4</scope>
    <scope>FUNCTION OF THE HAT-B COMPLEX</scope>
    <scope>SUBCELLULAR LOCATION</scope>
</reference>
<reference key="10">
    <citation type="journal article" date="2004" name="Mol. Cell">
        <title>The nuclear Hat1p/Hat2p complex: a molecular link between type B histone acetyltransferases and chromatin assembly.</title>
        <authorList>
            <person name="Ai X."/>
            <person name="Parthun M.R."/>
        </authorList>
    </citation>
    <scope>FUNCTION</scope>
    <scope>IDENTIFICATION IN THE HAT-B COMPLEX</scope>
    <scope>IDENTIFICATION BY MASS SPECTROMETRY</scope>
    <scope>INTERACTION WITH HISTONES H3 AND H4</scope>
    <scope>SUBCELLULAR LOCATION</scope>
</reference>
<reference key="11">
    <citation type="journal article" date="2008" name="Mol. Cell. Proteomics">
        <title>A multidimensional chromatography technology for in-depth phosphoproteome analysis.</title>
        <authorList>
            <person name="Albuquerque C.P."/>
            <person name="Smolka M.B."/>
            <person name="Payne S.H."/>
            <person name="Bafna V."/>
            <person name="Eng J."/>
            <person name="Zhou H."/>
        </authorList>
    </citation>
    <scope>PHOSPHORYLATION [LARGE SCALE ANALYSIS] AT SER-354</scope>
    <scope>IDENTIFICATION BY MASS SPECTROMETRY [LARGE SCALE ANALYSIS]</scope>
</reference>
<reference key="12">
    <citation type="journal article" date="1998" name="Cell">
        <title>Structure of the histone acetyltransferase Hat1: a paradigm for the GCN5-related N-acetyltransferase superfamily.</title>
        <authorList>
            <person name="Dutnall R.N."/>
            <person name="Tafrov S.T."/>
            <person name="Sternglanz R."/>
            <person name="Ramakrishnan V."/>
        </authorList>
    </citation>
    <scope>X-RAY CRYSTALLOGRAPHY (2.30 ANGSTROMS) OF 1-320 IN COMPLEX WITH ACETYL-COA</scope>
</reference>
<reference key="13">
    <citation type="journal article" date="2014" name="Genes Dev.">
        <title>Hat2p recognizes the histone H3 tail to specify the acetylation of the newly synthesized H3/H4 heterodimer by the Hat1p/Hat2p complex.</title>
        <authorList>
            <person name="Li Y."/>
            <person name="Zhang L."/>
            <person name="Liu T."/>
            <person name="Chai C."/>
            <person name="Fang Q."/>
            <person name="Wu H."/>
            <person name="Agudelo Garcia P.A."/>
            <person name="Han Z."/>
            <person name="Zong S."/>
            <person name="Yu Y."/>
            <person name="Zhang X."/>
            <person name="Parthun M.R."/>
            <person name="Chai J."/>
            <person name="Xu R.M."/>
            <person name="Yang M."/>
        </authorList>
    </citation>
    <scope>X-RAY CRYSTALLOGRAPHY (2.10 ANGSTROMS) OF 4-320 IN COMPLEXES WITH COENZYME A; HAT2 AND HISTONE PEPTIDES</scope>
    <scope>CATALYTIC ACTIVITY</scope>
    <scope>SUBUNIT</scope>
    <scope>FUNCTION</scope>
    <scope>ACTIVE SITE</scope>
    <scope>MUTAGENESIS OF TRP-197; TYR-199; ALA-202; PHE-205 AND ARG-214</scope>
</reference>
<proteinExistence type="evidence at protein level"/>
<name>HAT1_YEAST</name>